<organism>
    <name type="scientific">Streptomyces coelicolor (strain ATCC BAA-471 / A3(2) / M145)</name>
    <dbReference type="NCBI Taxonomy" id="100226"/>
    <lineage>
        <taxon>Bacteria</taxon>
        <taxon>Bacillati</taxon>
        <taxon>Actinomycetota</taxon>
        <taxon>Actinomycetes</taxon>
        <taxon>Kitasatosporales</taxon>
        <taxon>Streptomycetaceae</taxon>
        <taxon>Streptomyces</taxon>
        <taxon>Streptomyces albidoflavus group</taxon>
    </lineage>
</organism>
<accession>P18182</accession>
<accession>Q9L2F1</accession>
<comment type="function">
    <text>Sigma factors are initiation factors that promote the attachment of RNA polymerase to specific initiation sites and are then released.</text>
</comment>
<comment type="subunit">
    <text evidence="1 3">Interacts transiently with the RNA polymerase catalytic core (By similarity). Interacts with RNA polymerase-binding protein RbpA.</text>
</comment>
<comment type="similarity">
    <text evidence="4">Belongs to the sigma-70 factor family.</text>
</comment>
<sequence>MRGGQRRASRLRPPTYRRRPPPAASILEVAPVQTQTLTQTDTAAGGAEPDAERGVLLAMPAQPGAGAALPHPGAPVDVPEHPEPPPPTRTESGGPSSDLFRQYLREIGRIPLLSAAEEVDLARRVEAGLFAEEKLRCSPGLDDRLALDLDRLVVLGRLAKRRLIEANLRLVVSVAKRYVGRGLTMLDLVQEGNLGLIRAVEKFDYARGYKFSTYATWWIRQAMSRALADQARTIRVPVHVVELINRVVRVQRRMLQERGCEPTPQEVAAHLDLAPERVGEVLRLAQEPVSLHAPVGEEDDVALGDLIEDGDAASPVESAAFLLLRQHLEAVLSTLGERERKVVQLRYGLADGRPRTLEEIGRLFGVTRERIRQIESKTLSKLRDHAYADQLRGYLD</sequence>
<reference key="1">
    <citation type="journal article" date="1991" name="Mol. Gen. Genet.">
        <title>Nucleotide sequence of genes hrdA, hrdC, and hrdD from Streptomyces coelicolor A3(2) having similarity to rpoD genes.</title>
        <authorList>
            <person name="Tanaka K."/>
            <person name="Shiina T."/>
            <person name="Takahashi H."/>
        </authorList>
    </citation>
    <scope>NUCLEOTIDE SEQUENCE [GENOMIC DNA]</scope>
    <source>
        <strain>A3(2) / NRRL B-16638</strain>
    </source>
</reference>
<reference key="2">
    <citation type="journal article" date="2002" name="Nature">
        <title>Complete genome sequence of the model actinomycete Streptomyces coelicolor A3(2).</title>
        <authorList>
            <person name="Bentley S.D."/>
            <person name="Chater K.F."/>
            <person name="Cerdeno-Tarraga A.-M."/>
            <person name="Challis G.L."/>
            <person name="Thomson N.R."/>
            <person name="James K.D."/>
            <person name="Harris D.E."/>
            <person name="Quail M.A."/>
            <person name="Kieser H."/>
            <person name="Harper D."/>
            <person name="Bateman A."/>
            <person name="Brown S."/>
            <person name="Chandra G."/>
            <person name="Chen C.W."/>
            <person name="Collins M."/>
            <person name="Cronin A."/>
            <person name="Fraser A."/>
            <person name="Goble A."/>
            <person name="Hidalgo J."/>
            <person name="Hornsby T."/>
            <person name="Howarth S."/>
            <person name="Huang C.-H."/>
            <person name="Kieser T."/>
            <person name="Larke L."/>
            <person name="Murphy L.D."/>
            <person name="Oliver K."/>
            <person name="O'Neil S."/>
            <person name="Rabbinowitsch E."/>
            <person name="Rajandream M.A."/>
            <person name="Rutherford K.M."/>
            <person name="Rutter S."/>
            <person name="Seeger K."/>
            <person name="Saunders D."/>
            <person name="Sharp S."/>
            <person name="Squares R."/>
            <person name="Squares S."/>
            <person name="Taylor K."/>
            <person name="Warren T."/>
            <person name="Wietzorrek A."/>
            <person name="Woodward J.R."/>
            <person name="Barrell B.G."/>
            <person name="Parkhill J."/>
            <person name="Hopwood D.A."/>
        </authorList>
    </citation>
    <scope>NUCLEOTIDE SEQUENCE [LARGE SCALE GENOMIC DNA]</scope>
    <source>
        <strain>ATCC BAA-471 / A3(2) / M145</strain>
    </source>
</reference>
<reference key="3">
    <citation type="journal article" date="1988" name="Science">
        <title>Multiple principal sigma factor homologs in eubacteria: identification of the 'rpoD box'.</title>
        <authorList>
            <person name="Tanaka K."/>
            <person name="Shiina T."/>
            <person name="Takahashi H."/>
        </authorList>
    </citation>
    <scope>NUCLEOTIDE SEQUENCE [GENOMIC DNA] OF 191-242</scope>
    <source>
        <strain>A3(2) / NRRL B-16638</strain>
    </source>
</reference>
<reference key="4">
    <citation type="journal article" date="2013" name="Nucleic Acids Res.">
        <title>The actinobacterial transcription factor RbpA binds to the principal sigma subunit of RNA polymerase.</title>
        <authorList>
            <person name="Tabib-Salazar A."/>
            <person name="Liu B."/>
            <person name="Doughty P."/>
            <person name="Lewis R.A."/>
            <person name="Ghosh S."/>
            <person name="Parsy M.L."/>
            <person name="Simpson P.J."/>
            <person name="O'Dwyer K."/>
            <person name="Matthews S.J."/>
            <person name="Paget M.S."/>
        </authorList>
    </citation>
    <scope>SUBUNIT</scope>
    <source>
        <strain>ATCC BAA-471 / A3(2) / M145</strain>
    </source>
</reference>
<proteinExistence type="evidence at protein level"/>
<evidence type="ECO:0000250" key="1"/>
<evidence type="ECO:0000256" key="2">
    <source>
        <dbReference type="SAM" id="MobiDB-lite"/>
    </source>
</evidence>
<evidence type="ECO:0000269" key="3">
    <source>
    </source>
</evidence>
<evidence type="ECO:0000305" key="4"/>
<protein>
    <recommendedName>
        <fullName>RNA polymerase principal sigma factor HrdA</fullName>
    </recommendedName>
</protein>
<dbReference type="EMBL" id="X52980">
    <property type="protein sequence ID" value="CAA37172.1"/>
    <property type="molecule type" value="Genomic_DNA"/>
</dbReference>
<dbReference type="EMBL" id="AL939112">
    <property type="protein sequence ID" value="CAB69753.1"/>
    <property type="molecule type" value="Genomic_DNA"/>
</dbReference>
<dbReference type="PIR" id="S17929">
    <property type="entry name" value="S17929"/>
</dbReference>
<dbReference type="RefSeq" id="NP_626707.1">
    <property type="nucleotide sequence ID" value="NC_003888.3"/>
</dbReference>
<dbReference type="RefSeq" id="WP_003976339.1">
    <property type="nucleotide sequence ID" value="NZ_VNID01000001.1"/>
</dbReference>
<dbReference type="SMR" id="P18182"/>
<dbReference type="STRING" id="100226.gene:17760067"/>
<dbReference type="PaxDb" id="100226-SCO2465"/>
<dbReference type="KEGG" id="sco:SCO2465"/>
<dbReference type="PATRIC" id="fig|100226.15.peg.2506"/>
<dbReference type="eggNOG" id="COG0568">
    <property type="taxonomic scope" value="Bacteria"/>
</dbReference>
<dbReference type="HOGENOM" id="CLU_014793_3_6_11"/>
<dbReference type="InParanoid" id="P18182"/>
<dbReference type="OrthoDB" id="9809557at2"/>
<dbReference type="PhylomeDB" id="P18182"/>
<dbReference type="Proteomes" id="UP000001973">
    <property type="component" value="Chromosome"/>
</dbReference>
<dbReference type="GO" id="GO:0003677">
    <property type="term" value="F:DNA binding"/>
    <property type="evidence" value="ECO:0007669"/>
    <property type="project" value="UniProtKB-KW"/>
</dbReference>
<dbReference type="GO" id="GO:0016987">
    <property type="term" value="F:sigma factor activity"/>
    <property type="evidence" value="ECO:0007669"/>
    <property type="project" value="UniProtKB-KW"/>
</dbReference>
<dbReference type="GO" id="GO:0006352">
    <property type="term" value="P:DNA-templated transcription initiation"/>
    <property type="evidence" value="ECO:0007669"/>
    <property type="project" value="InterPro"/>
</dbReference>
<dbReference type="CDD" id="cd06171">
    <property type="entry name" value="Sigma70_r4"/>
    <property type="match status" value="1"/>
</dbReference>
<dbReference type="FunFam" id="1.10.601.10:FF:000001">
    <property type="entry name" value="RNA polymerase sigma factor SigA"/>
    <property type="match status" value="1"/>
</dbReference>
<dbReference type="Gene3D" id="1.10.601.10">
    <property type="entry name" value="RNA Polymerase Primary Sigma Factor"/>
    <property type="match status" value="2"/>
</dbReference>
<dbReference type="Gene3D" id="1.10.10.10">
    <property type="entry name" value="Winged helix-like DNA-binding domain superfamily/Winged helix DNA-binding domain"/>
    <property type="match status" value="2"/>
</dbReference>
<dbReference type="InterPro" id="IPR014284">
    <property type="entry name" value="RNA_pol_sigma-70_dom"/>
</dbReference>
<dbReference type="InterPro" id="IPR000943">
    <property type="entry name" value="RNA_pol_sigma70"/>
</dbReference>
<dbReference type="InterPro" id="IPR009042">
    <property type="entry name" value="RNA_pol_sigma70_r1_2"/>
</dbReference>
<dbReference type="InterPro" id="IPR007627">
    <property type="entry name" value="RNA_pol_sigma70_r2"/>
</dbReference>
<dbReference type="InterPro" id="IPR007624">
    <property type="entry name" value="RNA_pol_sigma70_r3"/>
</dbReference>
<dbReference type="InterPro" id="IPR007630">
    <property type="entry name" value="RNA_pol_sigma70_r4"/>
</dbReference>
<dbReference type="InterPro" id="IPR013325">
    <property type="entry name" value="RNA_pol_sigma_r2"/>
</dbReference>
<dbReference type="InterPro" id="IPR013324">
    <property type="entry name" value="RNA_pol_sigma_r3/r4-like"/>
</dbReference>
<dbReference type="InterPro" id="IPR050239">
    <property type="entry name" value="Sigma-70_RNA_pol_init_factors"/>
</dbReference>
<dbReference type="InterPro" id="IPR036388">
    <property type="entry name" value="WH-like_DNA-bd_sf"/>
</dbReference>
<dbReference type="NCBIfam" id="TIGR02937">
    <property type="entry name" value="sigma70-ECF"/>
    <property type="match status" value="1"/>
</dbReference>
<dbReference type="PANTHER" id="PTHR30603:SF59">
    <property type="entry name" value="RNA POLYMERASE PRINCIPAL SIGMA FACTOR HRDA"/>
    <property type="match status" value="1"/>
</dbReference>
<dbReference type="PANTHER" id="PTHR30603">
    <property type="entry name" value="RNA POLYMERASE SIGMA FACTOR RPO"/>
    <property type="match status" value="1"/>
</dbReference>
<dbReference type="Pfam" id="PF00140">
    <property type="entry name" value="Sigma70_r1_2"/>
    <property type="match status" value="1"/>
</dbReference>
<dbReference type="Pfam" id="PF04542">
    <property type="entry name" value="Sigma70_r2"/>
    <property type="match status" value="1"/>
</dbReference>
<dbReference type="Pfam" id="PF04539">
    <property type="entry name" value="Sigma70_r3"/>
    <property type="match status" value="1"/>
</dbReference>
<dbReference type="Pfam" id="PF04545">
    <property type="entry name" value="Sigma70_r4"/>
    <property type="match status" value="1"/>
</dbReference>
<dbReference type="PRINTS" id="PR00046">
    <property type="entry name" value="SIGMA70FCT"/>
</dbReference>
<dbReference type="SUPFAM" id="SSF88946">
    <property type="entry name" value="Sigma2 domain of RNA polymerase sigma factors"/>
    <property type="match status" value="1"/>
</dbReference>
<dbReference type="SUPFAM" id="SSF88659">
    <property type="entry name" value="Sigma3 and sigma4 domains of RNA polymerase sigma factors"/>
    <property type="match status" value="2"/>
</dbReference>
<dbReference type="PROSITE" id="PS00715">
    <property type="entry name" value="SIGMA70_1"/>
    <property type="match status" value="1"/>
</dbReference>
<dbReference type="PROSITE" id="PS00716">
    <property type="entry name" value="SIGMA70_2"/>
    <property type="match status" value="1"/>
</dbReference>
<name>HRDA_STRCO</name>
<gene>
    <name type="primary">hrdA</name>
    <name type="ordered locus">SCO2465</name>
    <name type="ORF">SC7A8.04c</name>
</gene>
<keyword id="KW-0238">DNA-binding</keyword>
<keyword id="KW-1185">Reference proteome</keyword>
<keyword id="KW-0731">Sigma factor</keyword>
<keyword id="KW-0804">Transcription</keyword>
<keyword id="KW-0805">Transcription regulation</keyword>
<feature type="chain" id="PRO_0000093990" description="RNA polymerase principal sigma factor HrdA">
    <location>
        <begin position="1"/>
        <end position="396"/>
    </location>
</feature>
<feature type="DNA-binding region" description="H-T-H motif" evidence="1">
    <location>
        <begin position="357"/>
        <end position="376"/>
    </location>
</feature>
<feature type="region of interest" description="Disordered" evidence="2">
    <location>
        <begin position="1"/>
        <end position="96"/>
    </location>
</feature>
<feature type="short sequence motif" description="Polymerase core binding">
    <location>
        <begin position="187"/>
        <end position="200"/>
    </location>
</feature>
<feature type="compositionally biased region" description="Basic residues" evidence="2">
    <location>
        <begin position="1"/>
        <end position="20"/>
    </location>
</feature>
<feature type="compositionally biased region" description="Low complexity" evidence="2">
    <location>
        <begin position="33"/>
        <end position="42"/>
    </location>
</feature>
<feature type="compositionally biased region" description="Low complexity" evidence="2">
    <location>
        <begin position="56"/>
        <end position="75"/>
    </location>
</feature>
<feature type="sequence conflict" description="In Ref. 3; no nucleotide entry." evidence="4" ref="3">
    <original>F</original>
    <variation>I</variation>
    <location>
        <position position="211"/>
    </location>
</feature>
<feature type="sequence conflict" description="In Ref. 1; CAA37172." evidence="4" ref="1">
    <original>F</original>
    <variation>G</variation>
    <location>
        <position position="364"/>
    </location>
</feature>